<reference key="1">
    <citation type="journal article" date="1995" name="Plant Physiol.">
        <title>Nucleotide sequence of rice cDNA that encodes a ubiquitin protein and a 79-amino acid protein.</title>
        <authorList>
            <person name="Kim H.U."/>
            <person name="Yun C.H."/>
            <person name="Cho W.S."/>
            <person name="Kang S.K."/>
            <person name="Chung T.Y."/>
        </authorList>
    </citation>
    <scope>NUCLEOTIDE SEQUENCE [MRNA]</scope>
</reference>
<reference key="2">
    <citation type="journal article" date="2005" name="Mol. Genet. Genomics">
        <title>A fine physical map of the rice chromosome 5.</title>
        <authorList>
            <person name="Cheng C.-H."/>
            <person name="Chung M.C."/>
            <person name="Liu S.-M."/>
            <person name="Chen S.-K."/>
            <person name="Kao F.Y."/>
            <person name="Lin S.-J."/>
            <person name="Hsiao S.-H."/>
            <person name="Tseng I.C."/>
            <person name="Hsing Y.-I.C."/>
            <person name="Wu H.-P."/>
            <person name="Chen C.-S."/>
            <person name="Shaw J.-F."/>
            <person name="Wu J."/>
            <person name="Matsumoto T."/>
            <person name="Sasaki T."/>
            <person name="Chen H.-C."/>
            <person name="Chow T.-Y."/>
        </authorList>
    </citation>
    <scope>NUCLEOTIDE SEQUENCE [LARGE SCALE GENOMIC DNA]</scope>
    <source>
        <strain>cv. Nipponbare</strain>
    </source>
</reference>
<reference key="3">
    <citation type="journal article" date="2005" name="Nature">
        <title>The map-based sequence of the rice genome.</title>
        <authorList>
            <consortium name="International rice genome sequencing project (IRGSP)"/>
        </authorList>
    </citation>
    <scope>NUCLEOTIDE SEQUENCE [LARGE SCALE GENOMIC DNA]</scope>
    <source>
        <strain>cv. Nipponbare</strain>
    </source>
</reference>
<reference key="4">
    <citation type="journal article" date="2008" name="Nucleic Acids Res.">
        <title>The rice annotation project database (RAP-DB): 2008 update.</title>
        <authorList>
            <consortium name="The rice annotation project (RAP)"/>
        </authorList>
    </citation>
    <scope>GENOME REANNOTATION</scope>
    <source>
        <strain>cv. Nipponbare</strain>
    </source>
</reference>
<reference key="5">
    <citation type="journal article" date="2013" name="Rice">
        <title>Improvement of the Oryza sativa Nipponbare reference genome using next generation sequence and optical map data.</title>
        <authorList>
            <person name="Kawahara Y."/>
            <person name="de la Bastide M."/>
            <person name="Hamilton J.P."/>
            <person name="Kanamori H."/>
            <person name="McCombie W.R."/>
            <person name="Ouyang S."/>
            <person name="Schwartz D.C."/>
            <person name="Tanaka T."/>
            <person name="Wu J."/>
            <person name="Zhou S."/>
            <person name="Childs K.L."/>
            <person name="Davidson R.M."/>
            <person name="Lin H."/>
            <person name="Quesada-Ocampo L."/>
            <person name="Vaillancourt B."/>
            <person name="Sakai H."/>
            <person name="Lee S.S."/>
            <person name="Kim J."/>
            <person name="Numa H."/>
            <person name="Itoh T."/>
            <person name="Buell C.R."/>
            <person name="Matsumoto T."/>
        </authorList>
    </citation>
    <scope>GENOME REANNOTATION</scope>
    <source>
        <strain>cv. Nipponbare</strain>
    </source>
</reference>
<reference key="6">
    <citation type="journal article" date="2005" name="PLoS Biol.">
        <title>The genomes of Oryza sativa: a history of duplications.</title>
        <authorList>
            <person name="Yu J."/>
            <person name="Wang J."/>
            <person name="Lin W."/>
            <person name="Li S."/>
            <person name="Li H."/>
            <person name="Zhou J."/>
            <person name="Ni P."/>
            <person name="Dong W."/>
            <person name="Hu S."/>
            <person name="Zeng C."/>
            <person name="Zhang J."/>
            <person name="Zhang Y."/>
            <person name="Li R."/>
            <person name="Xu Z."/>
            <person name="Li S."/>
            <person name="Li X."/>
            <person name="Zheng H."/>
            <person name="Cong L."/>
            <person name="Lin L."/>
            <person name="Yin J."/>
            <person name="Geng J."/>
            <person name="Li G."/>
            <person name="Shi J."/>
            <person name="Liu J."/>
            <person name="Lv H."/>
            <person name="Li J."/>
            <person name="Wang J."/>
            <person name="Deng Y."/>
            <person name="Ran L."/>
            <person name="Shi X."/>
            <person name="Wang X."/>
            <person name="Wu Q."/>
            <person name="Li C."/>
            <person name="Ren X."/>
            <person name="Wang J."/>
            <person name="Wang X."/>
            <person name="Li D."/>
            <person name="Liu D."/>
            <person name="Zhang X."/>
            <person name="Ji Z."/>
            <person name="Zhao W."/>
            <person name="Sun Y."/>
            <person name="Zhang Z."/>
            <person name="Bao J."/>
            <person name="Han Y."/>
            <person name="Dong L."/>
            <person name="Ji J."/>
            <person name="Chen P."/>
            <person name="Wu S."/>
            <person name="Liu J."/>
            <person name="Xiao Y."/>
            <person name="Bu D."/>
            <person name="Tan J."/>
            <person name="Yang L."/>
            <person name="Ye C."/>
            <person name="Zhang J."/>
            <person name="Xu J."/>
            <person name="Zhou Y."/>
            <person name="Yu Y."/>
            <person name="Zhang B."/>
            <person name="Zhuang S."/>
            <person name="Wei H."/>
            <person name="Liu B."/>
            <person name="Lei M."/>
            <person name="Yu H."/>
            <person name="Li Y."/>
            <person name="Xu H."/>
            <person name="Wei S."/>
            <person name="He X."/>
            <person name="Fang L."/>
            <person name="Zhang Z."/>
            <person name="Zhang Y."/>
            <person name="Huang X."/>
            <person name="Su Z."/>
            <person name="Tong W."/>
            <person name="Li J."/>
            <person name="Tong Z."/>
            <person name="Li S."/>
            <person name="Ye J."/>
            <person name="Wang L."/>
            <person name="Fang L."/>
            <person name="Lei T."/>
            <person name="Chen C.-S."/>
            <person name="Chen H.-C."/>
            <person name="Xu Z."/>
            <person name="Li H."/>
            <person name="Huang H."/>
            <person name="Zhang F."/>
            <person name="Xu H."/>
            <person name="Li N."/>
            <person name="Zhao C."/>
            <person name="Li S."/>
            <person name="Dong L."/>
            <person name="Huang Y."/>
            <person name="Li L."/>
            <person name="Xi Y."/>
            <person name="Qi Q."/>
            <person name="Li W."/>
            <person name="Zhang B."/>
            <person name="Hu W."/>
            <person name="Zhang Y."/>
            <person name="Tian X."/>
            <person name="Jiao Y."/>
            <person name="Liang X."/>
            <person name="Jin J."/>
            <person name="Gao L."/>
            <person name="Zheng W."/>
            <person name="Hao B."/>
            <person name="Liu S.-M."/>
            <person name="Wang W."/>
            <person name="Yuan L."/>
            <person name="Cao M."/>
            <person name="McDermott J."/>
            <person name="Samudrala R."/>
            <person name="Wang J."/>
            <person name="Wong G.K.-S."/>
            <person name="Yang H."/>
        </authorList>
    </citation>
    <scope>NUCLEOTIDE SEQUENCE [LARGE SCALE GENOMIC DNA]</scope>
    <source>
        <strain>cv. Nipponbare</strain>
    </source>
</reference>
<reference key="7">
    <citation type="journal article" date="2003" name="Science">
        <title>Collection, mapping, and annotation of over 28,000 cDNA clones from japonica rice.</title>
        <authorList>
            <consortium name="The rice full-length cDNA consortium"/>
        </authorList>
    </citation>
    <scope>NUCLEOTIDE SEQUENCE [LARGE SCALE MRNA]</scope>
    <source>
        <strain>cv. Nipponbare</strain>
    </source>
</reference>
<protein>
    <recommendedName>
        <fullName evidence="3">Ubiquitin-ribosomal protein eS31y fusion protein</fullName>
    </recommendedName>
    <component>
        <recommendedName>
            <fullName>Ubiquitin</fullName>
        </recommendedName>
    </component>
    <component>
        <recommendedName>
            <fullName evidence="3">Small ribosomal subunit protein eS31y</fullName>
        </recommendedName>
        <alternativeName>
            <fullName>40S ribosomal protein S27a-2</fullName>
        </alternativeName>
    </component>
</protein>
<feature type="chain" id="PRO_0000396876" description="Ubiquitin">
    <location>
        <begin position="1"/>
        <end position="76"/>
    </location>
</feature>
<feature type="chain" id="PRO_0000137683" description="Small ribosomal subunit protein eS31y">
    <location>
        <begin position="77"/>
        <end position="155"/>
    </location>
</feature>
<feature type="domain" description="Ubiquitin-like" evidence="2">
    <location>
        <begin position="1"/>
        <end position="76"/>
    </location>
</feature>
<feature type="zinc finger region" description="C4-type">
    <location>
        <begin position="122"/>
        <end position="145"/>
    </location>
</feature>
<feature type="cross-link" description="Glycyl lysine isopeptide (Lys-Gly) (interchain with G-Cter in ubiquitin)" evidence="1">
    <location>
        <position position="48"/>
    </location>
</feature>
<feature type="cross-link" description="Glycyl lysine isopeptide (Lys-Gly) (interchain with G-Cter in ubiquitin)" evidence="1">
    <location>
        <position position="63"/>
    </location>
</feature>
<feature type="cross-link" description="Glycyl lysine isopeptide (Gly-Lys) (interchain with K-? in acceptor proteins)" evidence="2">
    <location>
        <position position="76"/>
    </location>
</feature>
<feature type="sequence conflict" description="In Ref. 1; AAA74960." evidence="3" ref="1">
    <original>SD</original>
    <variation>RH</variation>
    <location>
        <begin position="20"/>
        <end position="21"/>
    </location>
</feature>
<feature type="sequence conflict" description="In Ref. 1; AAA74960." evidence="3" ref="1">
    <original>L</original>
    <variation>F</variation>
    <location>
        <position position="43"/>
    </location>
</feature>
<feature type="sequence conflict" description="In Ref. 1; AAA74960." evidence="3" ref="1">
    <original>L</original>
    <variation>H</variation>
    <location>
        <position position="69"/>
    </location>
</feature>
<feature type="sequence conflict" description="In Ref. 1; AAA74960." evidence="3" ref="1">
    <original>N</original>
    <variation>H</variation>
    <location>
        <position position="125"/>
    </location>
</feature>
<feature type="sequence conflict" description="In Ref. 1; AAA74960." evidence="3" ref="1">
    <original>G</original>
    <variation>R</variation>
    <location>
        <position position="143"/>
    </location>
</feature>
<feature type="sequence conflict" description="In Ref. 1; AAA74960." evidence="3" ref="1">
    <original>G</original>
    <variation>R</variation>
    <location>
        <position position="146"/>
    </location>
</feature>
<evidence type="ECO:0000250" key="1"/>
<evidence type="ECO:0000255" key="2">
    <source>
        <dbReference type="PROSITE-ProRule" id="PRU00214"/>
    </source>
</evidence>
<evidence type="ECO:0000305" key="3"/>
<evidence type="ECO:0000312" key="4">
    <source>
        <dbReference type="EMBL" id="EEE62418.1"/>
    </source>
</evidence>
<name>R27AB_ORYSJ</name>
<accession>P51431</accession>
<accession>B7F573</accession>
<accession>O82079</accession>
<accession>P03993</accession>
<accession>P69321</accession>
<accession>Q0DKI9</accession>
<accession>Q652Q2</accession>
<accession>Q67UR4</accession>
<accession>Q69P70</accession>
<accession>Q6ATC2</accession>
<accession>Q7XN78</accession>
<accession>Q8S5Y3</accession>
<accession>Q9AR09</accession>
<dbReference type="EMBL" id="L31941">
    <property type="protein sequence ID" value="AAA74960.1"/>
    <property type="molecule type" value="mRNA"/>
</dbReference>
<dbReference type="EMBL" id="AC119288">
    <property type="protein sequence ID" value="AAV43924.1"/>
    <property type="molecule type" value="Genomic_DNA"/>
</dbReference>
<dbReference type="EMBL" id="AC137614">
    <property type="protein sequence ID" value="AAT93912.1"/>
    <property type="molecule type" value="Genomic_DNA"/>
</dbReference>
<dbReference type="EMBL" id="AP008211">
    <property type="protein sequence ID" value="BAF16634.2"/>
    <property type="molecule type" value="Genomic_DNA"/>
</dbReference>
<dbReference type="EMBL" id="AP014961">
    <property type="protein sequence ID" value="BAS92399.1"/>
    <property type="molecule type" value="Genomic_DNA"/>
</dbReference>
<dbReference type="EMBL" id="CM000142">
    <property type="protein sequence ID" value="EEE62418.1"/>
    <property type="molecule type" value="Genomic_DNA"/>
</dbReference>
<dbReference type="EMBL" id="AK119731">
    <property type="protein sequence ID" value="BAG99770.1"/>
    <property type="molecule type" value="mRNA"/>
</dbReference>
<dbReference type="PIR" id="T04026">
    <property type="entry name" value="T04026"/>
</dbReference>
<dbReference type="RefSeq" id="XP_015639337.1">
    <property type="nucleotide sequence ID" value="XM_015783851.1"/>
</dbReference>
<dbReference type="SMR" id="P51431"/>
<dbReference type="FunCoup" id="P51431">
    <property type="interactions" value="2232"/>
</dbReference>
<dbReference type="STRING" id="39947.P51431"/>
<dbReference type="PaxDb" id="39947-P51431"/>
<dbReference type="EnsemblPlants" id="Os05t0160200-01">
    <property type="protein sequence ID" value="Os05t0160200-01"/>
    <property type="gene ID" value="Os05g0160200"/>
</dbReference>
<dbReference type="Gramene" id="Os05t0160200-01">
    <property type="protein sequence ID" value="Os05t0160200-01"/>
    <property type="gene ID" value="Os05g0160200"/>
</dbReference>
<dbReference type="KEGG" id="dosa:Os05g0160200"/>
<dbReference type="eggNOG" id="KOG0004">
    <property type="taxonomic scope" value="Eukaryota"/>
</dbReference>
<dbReference type="HOGENOM" id="CLU_010412_2_0_1"/>
<dbReference type="InParanoid" id="P51431"/>
<dbReference type="OMA" id="HANRHYC"/>
<dbReference type="OrthoDB" id="1649877at2759"/>
<dbReference type="Proteomes" id="UP000000763">
    <property type="component" value="Chromosome 5"/>
</dbReference>
<dbReference type="Proteomes" id="UP000007752">
    <property type="component" value="Chromosome 5"/>
</dbReference>
<dbReference type="Proteomes" id="UP000059680">
    <property type="component" value="Chromosome 5"/>
</dbReference>
<dbReference type="GO" id="GO:0005737">
    <property type="term" value="C:cytoplasm"/>
    <property type="evidence" value="ECO:0000318"/>
    <property type="project" value="GO_Central"/>
</dbReference>
<dbReference type="GO" id="GO:0005634">
    <property type="term" value="C:nucleus"/>
    <property type="evidence" value="ECO:0000318"/>
    <property type="project" value="GO_Central"/>
</dbReference>
<dbReference type="GO" id="GO:0009536">
    <property type="term" value="C:plastid"/>
    <property type="evidence" value="ECO:0007669"/>
    <property type="project" value="UniProtKB-ARBA"/>
</dbReference>
<dbReference type="GO" id="GO:1990904">
    <property type="term" value="C:ribonucleoprotein complex"/>
    <property type="evidence" value="ECO:0007669"/>
    <property type="project" value="UniProtKB-KW"/>
</dbReference>
<dbReference type="GO" id="GO:0005840">
    <property type="term" value="C:ribosome"/>
    <property type="evidence" value="ECO:0007669"/>
    <property type="project" value="UniProtKB-KW"/>
</dbReference>
<dbReference type="GO" id="GO:0003729">
    <property type="term" value="F:mRNA binding"/>
    <property type="evidence" value="ECO:0007669"/>
    <property type="project" value="UniProtKB-ARBA"/>
</dbReference>
<dbReference type="GO" id="GO:0031386">
    <property type="term" value="F:protein tag activity"/>
    <property type="evidence" value="ECO:0000318"/>
    <property type="project" value="GO_Central"/>
</dbReference>
<dbReference type="GO" id="GO:0003735">
    <property type="term" value="F:structural constituent of ribosome"/>
    <property type="evidence" value="ECO:0007669"/>
    <property type="project" value="InterPro"/>
</dbReference>
<dbReference type="GO" id="GO:0031625">
    <property type="term" value="F:ubiquitin protein ligase binding"/>
    <property type="evidence" value="ECO:0000318"/>
    <property type="project" value="GO_Central"/>
</dbReference>
<dbReference type="GO" id="GO:0008270">
    <property type="term" value="F:zinc ion binding"/>
    <property type="evidence" value="ECO:0007669"/>
    <property type="project" value="UniProtKB-KW"/>
</dbReference>
<dbReference type="GO" id="GO:0019941">
    <property type="term" value="P:modification-dependent protein catabolic process"/>
    <property type="evidence" value="ECO:0000318"/>
    <property type="project" value="GO_Central"/>
</dbReference>
<dbReference type="GO" id="GO:0016567">
    <property type="term" value="P:protein ubiquitination"/>
    <property type="evidence" value="ECO:0000318"/>
    <property type="project" value="GO_Central"/>
</dbReference>
<dbReference type="GO" id="GO:0006412">
    <property type="term" value="P:translation"/>
    <property type="evidence" value="ECO:0007669"/>
    <property type="project" value="InterPro"/>
</dbReference>
<dbReference type="CDD" id="cd01803">
    <property type="entry name" value="Ubl_ubiquitin"/>
    <property type="match status" value="1"/>
</dbReference>
<dbReference type="FunFam" id="3.10.20.90:FF:000008">
    <property type="entry name" value="Ubiquitin-40S ribosomal protein S27a"/>
    <property type="match status" value="1"/>
</dbReference>
<dbReference type="Gene3D" id="6.20.50.150">
    <property type="match status" value="1"/>
</dbReference>
<dbReference type="Gene3D" id="3.10.20.90">
    <property type="entry name" value="Phosphatidylinositol 3-kinase Catalytic Subunit, Chain A, domain 1"/>
    <property type="match status" value="1"/>
</dbReference>
<dbReference type="InterPro" id="IPR002906">
    <property type="entry name" value="Ribosomal_eS31"/>
</dbReference>
<dbReference type="InterPro" id="IPR038582">
    <property type="entry name" value="Ribosomal_eS31_euk-type_sf"/>
</dbReference>
<dbReference type="InterPro" id="IPR011332">
    <property type="entry name" value="Ribosomal_zn-bd"/>
</dbReference>
<dbReference type="InterPro" id="IPR000626">
    <property type="entry name" value="Ubiquitin-like_dom"/>
</dbReference>
<dbReference type="InterPro" id="IPR029071">
    <property type="entry name" value="Ubiquitin-like_domsf"/>
</dbReference>
<dbReference type="InterPro" id="IPR019954">
    <property type="entry name" value="Ubiquitin_CS"/>
</dbReference>
<dbReference type="InterPro" id="IPR019956">
    <property type="entry name" value="Ubiquitin_dom"/>
</dbReference>
<dbReference type="InterPro" id="IPR050158">
    <property type="entry name" value="Ubiquitin_ubiquitin-like"/>
</dbReference>
<dbReference type="PANTHER" id="PTHR10666">
    <property type="entry name" value="UBIQUITIN"/>
    <property type="match status" value="1"/>
</dbReference>
<dbReference type="Pfam" id="PF01599">
    <property type="entry name" value="Ribosomal_S27"/>
    <property type="match status" value="1"/>
</dbReference>
<dbReference type="Pfam" id="PF00240">
    <property type="entry name" value="ubiquitin"/>
    <property type="match status" value="1"/>
</dbReference>
<dbReference type="PRINTS" id="PR00348">
    <property type="entry name" value="UBIQUITIN"/>
</dbReference>
<dbReference type="SMART" id="SM01402">
    <property type="entry name" value="Ribosomal_S27"/>
    <property type="match status" value="1"/>
</dbReference>
<dbReference type="SMART" id="SM00213">
    <property type="entry name" value="UBQ"/>
    <property type="match status" value="1"/>
</dbReference>
<dbReference type="SUPFAM" id="SSF54236">
    <property type="entry name" value="Ubiquitin-like"/>
    <property type="match status" value="1"/>
</dbReference>
<dbReference type="SUPFAM" id="SSF57829">
    <property type="entry name" value="Zn-binding ribosomal proteins"/>
    <property type="match status" value="1"/>
</dbReference>
<dbReference type="PROSITE" id="PS00299">
    <property type="entry name" value="UBIQUITIN_1"/>
    <property type="match status" value="1"/>
</dbReference>
<dbReference type="PROSITE" id="PS50053">
    <property type="entry name" value="UBIQUITIN_2"/>
    <property type="match status" value="1"/>
</dbReference>
<organism>
    <name type="scientific">Oryza sativa subsp. japonica</name>
    <name type="common">Rice</name>
    <dbReference type="NCBI Taxonomy" id="39947"/>
    <lineage>
        <taxon>Eukaryota</taxon>
        <taxon>Viridiplantae</taxon>
        <taxon>Streptophyta</taxon>
        <taxon>Embryophyta</taxon>
        <taxon>Tracheophyta</taxon>
        <taxon>Spermatophyta</taxon>
        <taxon>Magnoliopsida</taxon>
        <taxon>Liliopsida</taxon>
        <taxon>Poales</taxon>
        <taxon>Poaceae</taxon>
        <taxon>BOP clade</taxon>
        <taxon>Oryzoideae</taxon>
        <taxon>Oryzeae</taxon>
        <taxon>Oryzinae</taxon>
        <taxon>Oryza</taxon>
        <taxon>Oryza sativa</taxon>
    </lineage>
</organism>
<keyword id="KW-0963">Cytoplasm</keyword>
<keyword id="KW-1017">Isopeptide bond</keyword>
<keyword id="KW-0479">Metal-binding</keyword>
<keyword id="KW-0539">Nucleus</keyword>
<keyword id="KW-1185">Reference proteome</keyword>
<keyword id="KW-0687">Ribonucleoprotein</keyword>
<keyword id="KW-0689">Ribosomal protein</keyword>
<keyword id="KW-0832">Ubl conjugation</keyword>
<keyword id="KW-0862">Zinc</keyword>
<keyword id="KW-0863">Zinc-finger</keyword>
<comment type="function">
    <molecule>Ubiquitin</molecule>
    <text evidence="1">Exists either covalently attached to another protein, or free (unanchored). When covalently bound, it is conjugated to target proteins via an isopeptide bond either as a monomer (monoubiquitin), a polymer linked via different Lys residues of the ubiquitin (polyubiquitin chains) or a linear polymer linked via the initiator Met of the ubiquitin (linear polyubiquitin chains). Polyubiquitin chains, when attached to a target protein, have different functions depending on the Lys residue of the ubiquitin that is linked: Lys-48-linked is involved in protein degradation via the proteasome; Lys-63-linked is involved in endocytosis, and DNA-damage responses. Linear polymer chains formed via attachment by the initiator Met lead to cell signaling. Ubiquitin is usually conjugated to Lys residues of target proteins, however, in rare cases, conjugation to Cys or Ser residues has been observed. When polyubiquitin is free (unanchored-polyubiquitin), it also has distinct roles, such as in activation of protein kinases, and in signaling (By similarity).</text>
</comment>
<comment type="function">
    <molecule>Small ribosomal subunit protein eS31y</molecule>
    <text>Component of the 40S subunit of the ribosome.</text>
</comment>
<comment type="subunit">
    <molecule>Small ribosomal subunit protein eS31y</molecule>
    <text evidence="1">Part of the 40S ribosomal subunit.</text>
</comment>
<comment type="subcellular location">
    <molecule>Ubiquitin</molecule>
    <subcellularLocation>
        <location evidence="1">Cytoplasm</location>
    </subcellularLocation>
    <subcellularLocation>
        <location evidence="1">Nucleus</location>
    </subcellularLocation>
</comment>
<comment type="miscellaneous">
    <text>Ubiquitin is generally synthesized as a polyubiquitin precursor with tandem head to tail repeats. Often, there are one to three additional amino acids after the last repeat, removed in the mature protein. Alternatively, ubiquitin extension protein is synthesized as a single copy of ubiquitin fused to a ribosomal protein (either eL40 or eS31) or to an ubiquitin-related protein (either RUB1 or RUB2). Following translation, extension protein is cleaved from ubiquitin.</text>
</comment>
<comment type="similarity">
    <text evidence="3">In the N-terminal section; belongs to the ubiquitin family.</text>
</comment>
<comment type="similarity">
    <text evidence="3">In the C-terminal section; belongs to the eukaryotic ribosomal protein eS31 family.</text>
</comment>
<sequence>MQIFVKTLTGKTITLEVESSDTIDNVKAKIQDKEGIPPDQQRLIFAGKQLEDGRTLADYNIQKESTLHLVLRLRGGAKKRKKKTYTKPKKIKHKHKKVKLAVLQFYKVDDATGKVTRLRKECPNNDCGAGTFMANHFDRHYCGKCGLTYVYNQKA</sequence>
<gene>
    <name type="primary">RPS27AB</name>
    <name type="synonym">UBQ6</name>
    <name type="ordered locus">Os05g0160200</name>
    <name type="ordered locus">LOC_Os05g06770</name>
    <name evidence="4" type="ORF">OsJ_17209</name>
    <name type="ORF">OSJNBa0017J22.14</name>
    <name type="ORF">OSJNBa0034O12.6</name>
</gene>
<proteinExistence type="evidence at transcript level"/>